<protein>
    <recommendedName>
        <fullName>Bifunctional protein PutA</fullName>
    </recommendedName>
    <domain>
        <recommendedName>
            <fullName>Proline dehydrogenase</fullName>
            <ecNumber>1.5.5.2</ecNumber>
        </recommendedName>
        <alternativeName>
            <fullName>Proline oxidase</fullName>
        </alternativeName>
    </domain>
    <domain>
        <recommendedName>
            <fullName>Delta-1-pyrroline-5-carboxylate dehydrogenase</fullName>
            <shortName>P5C dehydrogenase</shortName>
            <ecNumber>1.2.1.88</ecNumber>
        </recommendedName>
        <alternativeName>
            <fullName>L-glutamate gamma-semialdehyde dehydrogenase</fullName>
        </alternativeName>
    </domain>
</protein>
<name>PUTA_ECOLI</name>
<organism>
    <name type="scientific">Escherichia coli (strain K12)</name>
    <dbReference type="NCBI Taxonomy" id="83333"/>
    <lineage>
        <taxon>Bacteria</taxon>
        <taxon>Pseudomonadati</taxon>
        <taxon>Pseudomonadota</taxon>
        <taxon>Gammaproteobacteria</taxon>
        <taxon>Enterobacterales</taxon>
        <taxon>Enterobacteriaceae</taxon>
        <taxon>Escherichia</taxon>
    </lineage>
</organism>
<comment type="function">
    <text>Oxidizes proline to glutamate for use as a carbon and nitrogen source and also function as a transcriptional repressor of the put operon.</text>
</comment>
<comment type="catalytic activity">
    <reaction>
        <text>L-proline + a quinone = (S)-1-pyrroline-5-carboxylate + a quinol + H(+)</text>
        <dbReference type="Rhea" id="RHEA:23784"/>
        <dbReference type="ChEBI" id="CHEBI:15378"/>
        <dbReference type="ChEBI" id="CHEBI:17388"/>
        <dbReference type="ChEBI" id="CHEBI:24646"/>
        <dbReference type="ChEBI" id="CHEBI:60039"/>
        <dbReference type="ChEBI" id="CHEBI:132124"/>
        <dbReference type="EC" id="1.5.5.2"/>
    </reaction>
</comment>
<comment type="catalytic activity">
    <reaction>
        <text>L-glutamate 5-semialdehyde + NAD(+) + H2O = L-glutamate + NADH + 2 H(+)</text>
        <dbReference type="Rhea" id="RHEA:30235"/>
        <dbReference type="ChEBI" id="CHEBI:15377"/>
        <dbReference type="ChEBI" id="CHEBI:15378"/>
        <dbReference type="ChEBI" id="CHEBI:29985"/>
        <dbReference type="ChEBI" id="CHEBI:57540"/>
        <dbReference type="ChEBI" id="CHEBI:57945"/>
        <dbReference type="ChEBI" id="CHEBI:58066"/>
        <dbReference type="EC" id="1.2.1.88"/>
    </reaction>
</comment>
<comment type="cofactor">
    <cofactor>
        <name>FAD</name>
        <dbReference type="ChEBI" id="CHEBI:57692"/>
    </cofactor>
</comment>
<comment type="pathway">
    <text>Amino-acid degradation; L-proline degradation into L-glutamate; L-glutamate from L-proline: step 1/2.</text>
</comment>
<comment type="pathway">
    <text>Amino-acid degradation; L-proline degradation into L-glutamate; L-glutamate from L-proline: step 2/2.</text>
</comment>
<comment type="subunit">
    <text evidence="2">Homodimer.</text>
</comment>
<comment type="interaction">
    <interactant intactId="EBI-369718">
        <id>P09546</id>
    </interactant>
    <interactant intactId="EBI-369718">
        <id>P09546</id>
        <label>putA</label>
    </interactant>
    <organismsDiffer>false</organismsDiffer>
    <experiments>5</experiments>
</comment>
<comment type="induction">
    <text>By proline, autorepression and catabolite repression, and is potentially nitrogen controlled.</text>
</comment>
<comment type="similarity">
    <text evidence="3">In the N-terminal section; belongs to the proline dehydrogenase family.</text>
</comment>
<comment type="similarity">
    <text evidence="3">In the C-terminal section; belongs to the aldehyde dehydrogenase family.</text>
</comment>
<reference key="1">
    <citation type="journal article" date="1994" name="J. Mol. Biol.">
        <title>Sequence analysis identifies the proline dehydrogenase and delta 1-pyrroline-5-carboxylate dehydrogenase domains of the multifunctional Escherichia coli PutA protein.</title>
        <authorList>
            <person name="Ling M."/>
            <person name="Allen S.W."/>
            <person name="Wood J.M."/>
        </authorList>
    </citation>
    <scope>NUCLEOTIDE SEQUENCE [GENOMIC DNA]</scope>
    <source>
        <strain>K12</strain>
    </source>
</reference>
<reference key="2">
    <citation type="journal article" date="1996" name="DNA Res.">
        <title>A 718-kb DNA sequence of the Escherichia coli K-12 genome corresponding to the 12.7-28.0 min region on the linkage map.</title>
        <authorList>
            <person name="Oshima T."/>
            <person name="Aiba H."/>
            <person name="Baba T."/>
            <person name="Fujita K."/>
            <person name="Hayashi K."/>
            <person name="Honjo A."/>
            <person name="Ikemoto K."/>
            <person name="Inada T."/>
            <person name="Itoh T."/>
            <person name="Kajihara M."/>
            <person name="Kanai K."/>
            <person name="Kashimoto K."/>
            <person name="Kimura S."/>
            <person name="Kitagawa M."/>
            <person name="Makino K."/>
            <person name="Masuda S."/>
            <person name="Miki T."/>
            <person name="Mizobuchi K."/>
            <person name="Mori H."/>
            <person name="Motomura K."/>
            <person name="Nakamura Y."/>
            <person name="Nashimoto H."/>
            <person name="Nishio Y."/>
            <person name="Saito N."/>
            <person name="Sampei G."/>
            <person name="Seki Y."/>
            <person name="Tagami H."/>
            <person name="Takemoto K."/>
            <person name="Wada C."/>
            <person name="Yamamoto Y."/>
            <person name="Yano M."/>
            <person name="Horiuchi T."/>
        </authorList>
    </citation>
    <scope>NUCLEOTIDE SEQUENCE [LARGE SCALE GENOMIC DNA]</scope>
    <source>
        <strain>K12 / W3110 / ATCC 27325 / DSM 5911</strain>
    </source>
</reference>
<reference key="3">
    <citation type="journal article" date="1997" name="Science">
        <title>The complete genome sequence of Escherichia coli K-12.</title>
        <authorList>
            <person name="Blattner F.R."/>
            <person name="Plunkett G. III"/>
            <person name="Bloch C.A."/>
            <person name="Perna N.T."/>
            <person name="Burland V."/>
            <person name="Riley M."/>
            <person name="Collado-Vides J."/>
            <person name="Glasner J.D."/>
            <person name="Rode C.K."/>
            <person name="Mayhew G.F."/>
            <person name="Gregor J."/>
            <person name="Davis N.W."/>
            <person name="Kirkpatrick H.A."/>
            <person name="Goeden M.A."/>
            <person name="Rose D.J."/>
            <person name="Mau B."/>
            <person name="Shao Y."/>
        </authorList>
    </citation>
    <scope>NUCLEOTIDE SEQUENCE [LARGE SCALE GENOMIC DNA]</scope>
    <source>
        <strain>K12 / MG1655 / ATCC 47076</strain>
    </source>
</reference>
<reference key="4">
    <citation type="journal article" date="2006" name="Mol. Syst. Biol.">
        <title>Highly accurate genome sequences of Escherichia coli K-12 strains MG1655 and W3110.</title>
        <authorList>
            <person name="Hayashi K."/>
            <person name="Morooka N."/>
            <person name="Yamamoto Y."/>
            <person name="Fujita K."/>
            <person name="Isono K."/>
            <person name="Choi S."/>
            <person name="Ohtsubo E."/>
            <person name="Baba T."/>
            <person name="Wanner B.L."/>
            <person name="Mori H."/>
            <person name="Horiuchi T."/>
        </authorList>
    </citation>
    <scope>NUCLEOTIDE SEQUENCE [LARGE SCALE GENOMIC DNA]</scope>
    <source>
        <strain>K12 / W3110 / ATCC 27325 / DSM 5911</strain>
    </source>
</reference>
<reference key="5">
    <citation type="journal article" date="1987" name="Mol. Gen. Genet.">
        <title>Nucleotide sequence of putC, the regulatory region for the put regulon of Escherichia coli K12.</title>
        <authorList>
            <person name="Nakao T."/>
            <person name="Yamato I."/>
            <person name="Anraku Y."/>
        </authorList>
    </citation>
    <scope>PRELIMINARY NUCLEOTIDE SEQUENCE [GENOMIC DNA] OF 1-60</scope>
    <source>
        <strain>K12</strain>
    </source>
</reference>
<reference key="6">
    <citation type="journal article" date="2003" name="Nat. Struct. Biol.">
        <title>Structure of the proline dehydrogenase domain of the multifunctional PutA flavoprotein.</title>
        <authorList>
            <person name="Lee Y.-H."/>
            <person name="Nadaraia S."/>
            <person name="Gu D."/>
            <person name="Becker D.F."/>
            <person name="Tanner J.J."/>
        </authorList>
    </citation>
    <scope>X-RAY CRYSTALLOGRAPHY (2.0 ANGSTROMS) OF 1-669 IN COMPLEX WITH FAD</scope>
    <scope>HOMODIMERIZATION</scope>
</reference>
<evidence type="ECO:0000250" key="1"/>
<evidence type="ECO:0000269" key="2">
    <source>
    </source>
</evidence>
<evidence type="ECO:0000305" key="3"/>
<evidence type="ECO:0007829" key="4">
    <source>
        <dbReference type="PDB" id="2GPE"/>
    </source>
</evidence>
<evidence type="ECO:0007829" key="5">
    <source>
        <dbReference type="PDB" id="3ITG"/>
    </source>
</evidence>
<evidence type="ECO:0007829" key="6">
    <source>
        <dbReference type="PDB" id="7MWU"/>
    </source>
</evidence>
<evidence type="ECO:0007829" key="7">
    <source>
        <dbReference type="PDB" id="7MWV"/>
    </source>
</evidence>
<accession>P09546</accession>
<accession>P78296</accession>
<dbReference type="EC" id="1.5.5.2"/>
<dbReference type="EC" id="1.2.1.88"/>
<dbReference type="EMBL" id="U05212">
    <property type="protein sequence ID" value="AAB59985.1"/>
    <property type="molecule type" value="Genomic_DNA"/>
</dbReference>
<dbReference type="EMBL" id="U00096">
    <property type="protein sequence ID" value="AAC74099.1"/>
    <property type="molecule type" value="Genomic_DNA"/>
</dbReference>
<dbReference type="EMBL" id="AP009048">
    <property type="protein sequence ID" value="BAA35791.1"/>
    <property type="molecule type" value="Genomic_DNA"/>
</dbReference>
<dbReference type="EMBL" id="X05653">
    <property type="protein sequence ID" value="CAA29141.1"/>
    <property type="status" value="ALT_SEQ"/>
    <property type="molecule type" value="Genomic_DNA"/>
</dbReference>
<dbReference type="PIR" id="D64843">
    <property type="entry name" value="D64843"/>
</dbReference>
<dbReference type="RefSeq" id="NP_415534.1">
    <property type="nucleotide sequence ID" value="NC_000913.3"/>
</dbReference>
<dbReference type="RefSeq" id="WP_001326840.1">
    <property type="nucleotide sequence ID" value="NZ_SSZK01000002.1"/>
</dbReference>
<dbReference type="PDB" id="1TIW">
    <property type="method" value="X-ray"/>
    <property type="resolution" value="2.00 A"/>
    <property type="chains" value="A=86-669"/>
</dbReference>
<dbReference type="PDB" id="1TJ0">
    <property type="method" value="X-ray"/>
    <property type="resolution" value="2.10 A"/>
    <property type="chains" value="A=86-669"/>
</dbReference>
<dbReference type="PDB" id="1TJ1">
    <property type="method" value="X-ray"/>
    <property type="resolution" value="2.00 A"/>
    <property type="chains" value="A=86-669"/>
</dbReference>
<dbReference type="PDB" id="1TJ2">
    <property type="method" value="X-ray"/>
    <property type="resolution" value="2.05 A"/>
    <property type="chains" value="A=86-669"/>
</dbReference>
<dbReference type="PDB" id="2AY0">
    <property type="method" value="X-ray"/>
    <property type="resolution" value="2.10 A"/>
    <property type="chains" value="A/B/C/D/E/F=1-52"/>
</dbReference>
<dbReference type="PDB" id="2FZM">
    <property type="method" value="X-ray"/>
    <property type="resolution" value="2.30 A"/>
    <property type="chains" value="A=86-669"/>
</dbReference>
<dbReference type="PDB" id="2FZN">
    <property type="method" value="X-ray"/>
    <property type="resolution" value="2.00 A"/>
    <property type="chains" value="A=86-669"/>
</dbReference>
<dbReference type="PDB" id="2GPE">
    <property type="method" value="X-ray"/>
    <property type="resolution" value="1.90 A"/>
    <property type="chains" value="A/B/C/D=1-52"/>
</dbReference>
<dbReference type="PDB" id="2RBF">
    <property type="method" value="X-ray"/>
    <property type="resolution" value="2.25 A"/>
    <property type="chains" value="A/B=1-52"/>
</dbReference>
<dbReference type="PDB" id="3E2Q">
    <property type="method" value="X-ray"/>
    <property type="resolution" value="1.75 A"/>
    <property type="chains" value="A=86-630"/>
</dbReference>
<dbReference type="PDB" id="3E2R">
    <property type="method" value="X-ray"/>
    <property type="resolution" value="1.85 A"/>
    <property type="chains" value="A=86-630"/>
</dbReference>
<dbReference type="PDB" id="3E2S">
    <property type="method" value="X-ray"/>
    <property type="resolution" value="2.00 A"/>
    <property type="chains" value="A=86-630"/>
</dbReference>
<dbReference type="PDB" id="3ITG">
    <property type="method" value="X-ray"/>
    <property type="resolution" value="2.15 A"/>
    <property type="chains" value="A/B=86-669"/>
</dbReference>
<dbReference type="PDB" id="4JNY">
    <property type="method" value="X-ray"/>
    <property type="resolution" value="1.90 A"/>
    <property type="chains" value="A=86-669"/>
</dbReference>
<dbReference type="PDB" id="4JNZ">
    <property type="method" value="X-ray"/>
    <property type="resolution" value="1.85 A"/>
    <property type="chains" value="A=86-669"/>
</dbReference>
<dbReference type="PDB" id="4O8A">
    <property type="method" value="X-ray"/>
    <property type="resolution" value="2.00 A"/>
    <property type="chains" value="A=1-669"/>
</dbReference>
<dbReference type="PDB" id="7MWT">
    <property type="method" value="X-ray"/>
    <property type="resolution" value="2.19 A"/>
    <property type="chains" value="A=86-630"/>
</dbReference>
<dbReference type="PDB" id="7MWU">
    <property type="method" value="X-ray"/>
    <property type="resolution" value="1.69 A"/>
    <property type="chains" value="A=86-630"/>
</dbReference>
<dbReference type="PDB" id="7MWV">
    <property type="method" value="X-ray"/>
    <property type="resolution" value="1.69 A"/>
    <property type="chains" value="A=86-630"/>
</dbReference>
<dbReference type="PDB" id="7SQN">
    <property type="method" value="X-ray"/>
    <property type="resolution" value="2.25 A"/>
    <property type="chains" value="A=86-630"/>
</dbReference>
<dbReference type="PDBsum" id="1TIW"/>
<dbReference type="PDBsum" id="1TJ0"/>
<dbReference type="PDBsum" id="1TJ1"/>
<dbReference type="PDBsum" id="1TJ2"/>
<dbReference type="PDBsum" id="2AY0"/>
<dbReference type="PDBsum" id="2FZM"/>
<dbReference type="PDBsum" id="2FZN"/>
<dbReference type="PDBsum" id="2GPE"/>
<dbReference type="PDBsum" id="2RBF"/>
<dbReference type="PDBsum" id="3E2Q"/>
<dbReference type="PDBsum" id="3E2R"/>
<dbReference type="PDBsum" id="3E2S"/>
<dbReference type="PDBsum" id="3ITG"/>
<dbReference type="PDBsum" id="4JNY"/>
<dbReference type="PDBsum" id="4JNZ"/>
<dbReference type="PDBsum" id="4O8A"/>
<dbReference type="PDBsum" id="7MWT"/>
<dbReference type="PDBsum" id="7MWU"/>
<dbReference type="PDBsum" id="7MWV"/>
<dbReference type="PDBsum" id="7SQN"/>
<dbReference type="SMR" id="P09546"/>
<dbReference type="BioGRID" id="4262846">
    <property type="interactions" value="120"/>
</dbReference>
<dbReference type="BioGRID" id="849974">
    <property type="interactions" value="1"/>
</dbReference>
<dbReference type="DIP" id="DIP-10620N"/>
<dbReference type="FunCoup" id="P09546">
    <property type="interactions" value="427"/>
</dbReference>
<dbReference type="IntAct" id="P09546">
    <property type="interactions" value="24"/>
</dbReference>
<dbReference type="MINT" id="P09546"/>
<dbReference type="STRING" id="511145.b1014"/>
<dbReference type="DrugBank" id="DB03051">
    <property type="generic name" value="(S)-2-Tetrahydrofuroic acid"/>
</dbReference>
<dbReference type="DrugBank" id="DB03147">
    <property type="generic name" value="Flavin adenine dinucleotide"/>
</dbReference>
<dbReference type="DrugBank" id="DB04398">
    <property type="generic name" value="Lactic acid"/>
</dbReference>
<dbReference type="MoonProt" id="P09546"/>
<dbReference type="jPOST" id="P09546"/>
<dbReference type="PaxDb" id="511145-b1014"/>
<dbReference type="EnsemblBacteria" id="AAC74099">
    <property type="protein sequence ID" value="AAC74099"/>
    <property type="gene ID" value="b1014"/>
</dbReference>
<dbReference type="GeneID" id="945600"/>
<dbReference type="KEGG" id="ecj:JW0999"/>
<dbReference type="KEGG" id="eco:b1014"/>
<dbReference type="KEGG" id="ecoc:C3026_06165"/>
<dbReference type="PATRIC" id="fig|1411691.4.peg.1257"/>
<dbReference type="EchoBASE" id="EB0794"/>
<dbReference type="eggNOG" id="COG0506">
    <property type="taxonomic scope" value="Bacteria"/>
</dbReference>
<dbReference type="eggNOG" id="COG3905">
    <property type="taxonomic scope" value="Bacteria"/>
</dbReference>
<dbReference type="eggNOG" id="COG4230">
    <property type="taxonomic scope" value="Bacteria"/>
</dbReference>
<dbReference type="HOGENOM" id="CLU_005682_1_0_6"/>
<dbReference type="InParanoid" id="P09546"/>
<dbReference type="OMA" id="TYSFDML"/>
<dbReference type="OrthoDB" id="9812625at2"/>
<dbReference type="PhylomeDB" id="P09546"/>
<dbReference type="BioCyc" id="EcoCyc:PUTA-MONOMER"/>
<dbReference type="BioCyc" id="MetaCyc:PUTA-MONOMER"/>
<dbReference type="BRENDA" id="1.2.1.88">
    <property type="organism ID" value="2026"/>
</dbReference>
<dbReference type="BRENDA" id="1.5.5.2">
    <property type="organism ID" value="2026"/>
</dbReference>
<dbReference type="UniPathway" id="UPA00261">
    <property type="reaction ID" value="UER00373"/>
</dbReference>
<dbReference type="UniPathway" id="UPA00261">
    <property type="reaction ID" value="UER00374"/>
</dbReference>
<dbReference type="EvolutionaryTrace" id="P09546"/>
<dbReference type="PRO" id="PR:P09546"/>
<dbReference type="Proteomes" id="UP000000625">
    <property type="component" value="Chromosome"/>
</dbReference>
<dbReference type="GO" id="GO:0009898">
    <property type="term" value="C:cytoplasmic side of plasma membrane"/>
    <property type="evidence" value="ECO:0000314"/>
    <property type="project" value="EcoCyc"/>
</dbReference>
<dbReference type="GO" id="GO:0005829">
    <property type="term" value="C:cytosol"/>
    <property type="evidence" value="ECO:0000314"/>
    <property type="project" value="EcoCyc"/>
</dbReference>
<dbReference type="GO" id="GO:0005886">
    <property type="term" value="C:plasma membrane"/>
    <property type="evidence" value="ECO:0000314"/>
    <property type="project" value="EcoCyc"/>
</dbReference>
<dbReference type="GO" id="GO:0003842">
    <property type="term" value="F:1-pyrroline-5-carboxylate dehydrogenase activity"/>
    <property type="evidence" value="ECO:0000314"/>
    <property type="project" value="EcoCyc"/>
</dbReference>
<dbReference type="GO" id="GO:0000987">
    <property type="term" value="F:cis-regulatory region sequence-specific DNA binding"/>
    <property type="evidence" value="ECO:0000314"/>
    <property type="project" value="EcoCyc"/>
</dbReference>
<dbReference type="GO" id="GO:0003677">
    <property type="term" value="F:DNA binding"/>
    <property type="evidence" value="ECO:0000314"/>
    <property type="project" value="EcoCyc"/>
</dbReference>
<dbReference type="GO" id="GO:0001217">
    <property type="term" value="F:DNA-binding transcription repressor activity"/>
    <property type="evidence" value="ECO:0000314"/>
    <property type="project" value="EcoCyc"/>
</dbReference>
<dbReference type="GO" id="GO:0050660">
    <property type="term" value="F:flavin adenine dinucleotide binding"/>
    <property type="evidence" value="ECO:0000314"/>
    <property type="project" value="EcoCyc"/>
</dbReference>
<dbReference type="GO" id="GO:0042802">
    <property type="term" value="F:identical protein binding"/>
    <property type="evidence" value="ECO:0000353"/>
    <property type="project" value="IntAct"/>
</dbReference>
<dbReference type="GO" id="GO:0004657">
    <property type="term" value="F:proline dehydrogenase activity"/>
    <property type="evidence" value="ECO:0000314"/>
    <property type="project" value="UniProtKB"/>
</dbReference>
<dbReference type="GO" id="GO:0042803">
    <property type="term" value="F:protein homodimerization activity"/>
    <property type="evidence" value="ECO:0000314"/>
    <property type="project" value="EcoCyc"/>
</dbReference>
<dbReference type="GO" id="GO:0043565">
    <property type="term" value="F:sequence-specific DNA binding"/>
    <property type="evidence" value="ECO:0000314"/>
    <property type="project" value="UniProtKB"/>
</dbReference>
<dbReference type="GO" id="GO:0045892">
    <property type="term" value="P:negative regulation of DNA-templated transcription"/>
    <property type="evidence" value="ECO:0000314"/>
    <property type="project" value="EcoCyc"/>
</dbReference>
<dbReference type="GO" id="GO:0006561">
    <property type="term" value="P:proline biosynthetic process"/>
    <property type="evidence" value="ECO:0007669"/>
    <property type="project" value="InterPro"/>
</dbReference>
<dbReference type="GO" id="GO:0010133">
    <property type="term" value="P:proline catabolic process to glutamate"/>
    <property type="evidence" value="ECO:0000315"/>
    <property type="project" value="EcoCyc"/>
</dbReference>
<dbReference type="GO" id="GO:0006979">
    <property type="term" value="P:response to oxidative stress"/>
    <property type="evidence" value="ECO:0000315"/>
    <property type="project" value="EcoCyc"/>
</dbReference>
<dbReference type="CDD" id="cd07125">
    <property type="entry name" value="ALDH_PutA-P5CDH"/>
    <property type="match status" value="1"/>
</dbReference>
<dbReference type="CDD" id="cd22233">
    <property type="entry name" value="RHH_CopAso-like"/>
    <property type="match status" value="1"/>
</dbReference>
<dbReference type="DisProt" id="DP02030"/>
<dbReference type="FunFam" id="3.40.309.10:FF:000005">
    <property type="entry name" value="1-pyrroline-5-carboxylate dehydrogenase 1"/>
    <property type="match status" value="1"/>
</dbReference>
<dbReference type="FunFam" id="1.20.5.460:FF:000001">
    <property type="entry name" value="Bifunctional protein PutA"/>
    <property type="match status" value="1"/>
</dbReference>
<dbReference type="FunFam" id="1.20.5.550:FF:000001">
    <property type="entry name" value="Bifunctional protein PutA"/>
    <property type="match status" value="1"/>
</dbReference>
<dbReference type="FunFam" id="3.20.20.220:FF:000004">
    <property type="entry name" value="Bifunctional protein PutA"/>
    <property type="match status" value="1"/>
</dbReference>
<dbReference type="FunFam" id="3.40.605.10:FF:000017">
    <property type="entry name" value="Bifunctional protein PutA"/>
    <property type="match status" value="1"/>
</dbReference>
<dbReference type="Gene3D" id="3.20.20.220">
    <property type="match status" value="1"/>
</dbReference>
<dbReference type="Gene3D" id="3.40.605.10">
    <property type="entry name" value="Aldehyde Dehydrogenase, Chain A, domain 1"/>
    <property type="match status" value="1"/>
</dbReference>
<dbReference type="Gene3D" id="3.40.309.10">
    <property type="entry name" value="Aldehyde Dehydrogenase, Chain A, domain 2"/>
    <property type="match status" value="1"/>
</dbReference>
<dbReference type="Gene3D" id="1.10.1220.10">
    <property type="entry name" value="Met repressor-like"/>
    <property type="match status" value="1"/>
</dbReference>
<dbReference type="Gene3D" id="1.20.5.550">
    <property type="entry name" value="Single Helix bin"/>
    <property type="match status" value="1"/>
</dbReference>
<dbReference type="Gene3D" id="1.20.5.460">
    <property type="entry name" value="Single helix bin"/>
    <property type="match status" value="1"/>
</dbReference>
<dbReference type="InterPro" id="IPR016161">
    <property type="entry name" value="Ald_DH/histidinol_DH"/>
</dbReference>
<dbReference type="InterPro" id="IPR016163">
    <property type="entry name" value="Ald_DH_C"/>
</dbReference>
<dbReference type="InterPro" id="IPR016160">
    <property type="entry name" value="Ald_DH_CS_CYS"/>
</dbReference>
<dbReference type="InterPro" id="IPR029510">
    <property type="entry name" value="Ald_DH_CS_GLU"/>
</dbReference>
<dbReference type="InterPro" id="IPR016162">
    <property type="entry name" value="Ald_DH_N"/>
</dbReference>
<dbReference type="InterPro" id="IPR015590">
    <property type="entry name" value="Aldehyde_DH_dom"/>
</dbReference>
<dbReference type="InterPro" id="IPR013321">
    <property type="entry name" value="Arc_rbn_hlx_hlx"/>
</dbReference>
<dbReference type="InterPro" id="IPR025703">
    <property type="entry name" value="Bifunct_PutA"/>
</dbReference>
<dbReference type="InterPro" id="IPR029041">
    <property type="entry name" value="FAD-linked_oxidoreductase-like"/>
</dbReference>
<dbReference type="InterPro" id="IPR041349">
    <property type="entry name" value="PRODH"/>
</dbReference>
<dbReference type="InterPro" id="IPR024090">
    <property type="entry name" value="PRODH_PutA_dom_I"/>
</dbReference>
<dbReference type="InterPro" id="IPR024089">
    <property type="entry name" value="PRODH_PutA_dom_I/II"/>
</dbReference>
<dbReference type="InterPro" id="IPR024082">
    <property type="entry name" value="PRODH_PutA_dom_II"/>
</dbReference>
<dbReference type="InterPro" id="IPR002872">
    <property type="entry name" value="Proline_DH_dom"/>
</dbReference>
<dbReference type="InterPro" id="IPR050485">
    <property type="entry name" value="Proline_metab_enzyme"/>
</dbReference>
<dbReference type="InterPro" id="IPR005933">
    <property type="entry name" value="PutA_C"/>
</dbReference>
<dbReference type="InterPro" id="IPR048798">
    <property type="entry name" value="PutA_RHH"/>
</dbReference>
<dbReference type="InterPro" id="IPR010985">
    <property type="entry name" value="Ribbon_hlx_hlx"/>
</dbReference>
<dbReference type="NCBIfam" id="TIGR01238">
    <property type="entry name" value="D1pyr5carbox3"/>
    <property type="match status" value="1"/>
</dbReference>
<dbReference type="NCBIfam" id="NF008772">
    <property type="entry name" value="PRK11809.1"/>
    <property type="match status" value="1"/>
</dbReference>
<dbReference type="NCBIfam" id="NF008869">
    <property type="entry name" value="PRK11904.1"/>
    <property type="match status" value="1"/>
</dbReference>
<dbReference type="PANTHER" id="PTHR42862">
    <property type="entry name" value="DELTA-1-PYRROLINE-5-CARBOXYLATE DEHYDROGENASE 1, ISOFORM A-RELATED"/>
    <property type="match status" value="1"/>
</dbReference>
<dbReference type="PANTHER" id="PTHR42862:SF1">
    <property type="entry name" value="DELTA-1-PYRROLINE-5-CARBOXYLATE DEHYDROGENASE 2, ISOFORM A-RELATED"/>
    <property type="match status" value="1"/>
</dbReference>
<dbReference type="Pfam" id="PF00171">
    <property type="entry name" value="Aldedh"/>
    <property type="match status" value="1"/>
</dbReference>
<dbReference type="Pfam" id="PF01619">
    <property type="entry name" value="Pro_dh"/>
    <property type="match status" value="1"/>
</dbReference>
<dbReference type="Pfam" id="PF14850">
    <property type="entry name" value="Pro_dh-DNA_bdg"/>
    <property type="match status" value="1"/>
</dbReference>
<dbReference type="Pfam" id="PF18327">
    <property type="entry name" value="PRODH"/>
    <property type="match status" value="1"/>
</dbReference>
<dbReference type="Pfam" id="PF21775">
    <property type="entry name" value="PutA_1st"/>
    <property type="match status" value="1"/>
</dbReference>
<dbReference type="PIRSF" id="PIRSF000197">
    <property type="entry name" value="Bifunct_PutA"/>
    <property type="match status" value="1"/>
</dbReference>
<dbReference type="SUPFAM" id="SSF53720">
    <property type="entry name" value="ALDH-like"/>
    <property type="match status" value="1"/>
</dbReference>
<dbReference type="SUPFAM" id="SSF51730">
    <property type="entry name" value="FAD-linked oxidoreductase"/>
    <property type="match status" value="1"/>
</dbReference>
<dbReference type="SUPFAM" id="SSF81935">
    <property type="entry name" value="N-terminal domain of bifunctional PutA protein"/>
    <property type="match status" value="1"/>
</dbReference>
<dbReference type="SUPFAM" id="SSF47598">
    <property type="entry name" value="Ribbon-helix-helix"/>
    <property type="match status" value="1"/>
</dbReference>
<dbReference type="PROSITE" id="PS00070">
    <property type="entry name" value="ALDEHYDE_DEHYDR_CYS"/>
    <property type="match status" value="1"/>
</dbReference>
<dbReference type="PROSITE" id="PS00687">
    <property type="entry name" value="ALDEHYDE_DEHYDR_GLU"/>
    <property type="match status" value="1"/>
</dbReference>
<gene>
    <name type="primary">putA</name>
    <name type="synonym">poaA</name>
    <name type="ordered locus">b1014</name>
    <name type="ordered locus">JW0999</name>
</gene>
<proteinExistence type="evidence at protein level"/>
<sequence>MGTTTMGVKLDDATRERIKSAATRIDRTPHWLIKQAIFSYLEQLENSDTLPELPALLSGAANESDEAPTPAEEPHQPFLDFAEQILPQSVSRAAITAAYRRPETEAVSMLLEQARLPQPVAEQAHKLAYQLADKLRNQKNASGRAGMVQGLLQEFSLSSQEGVALMCLAEALLRIPDKATRDALIRDKISNGNWQSHIGRSPSLFVNAATWGLLFTGKLVSTHNEASLSRSLNRIIGKSGEPLIRKGVDMAMRLMGEQFVTGETIAEALANARKLEEKGFRYSYDMLGEAALTAADAQAYMVSYQQAIHAIGKASNGRGIYEGPGISIKLSALHPRYSRAQYDRVMEELYPRLKSLTLLARQYDIGINIDAEESDRLEISLDLLEKLCFEPELAGWNGIGFVIQAYQKRCPLVIDYLIDLATRSRRRLMIRLVKGAYWDSEIKRAQMDGLEGYPVYTRKVYTDVSYLACAKKLLAVPNLIYPQFATHNAHTLAAIYQLAGQNYYPGQYEFQCLHGMGEPLYEQVTGKVADGKLNRPCRIYAPVGTHETLLAYLVRRLLENGANTSFVNRIADTSLPLDELVADPVTAVEKLAQQEGQTGLPHPKIPLPRDLYGHGRDNSAGLDLANEHRLASLSSALLNSALQKWQALPMLEQPVAAGEMSPVINPAEPKDIVGYVREATPREVEQALESAVNNAPIWFATPPAERAAILHRAAVLMESQMQQLIGILVREAGKTFSNAIAEVREAVDFLHYYAGQVRDDFANETHRPLGPVVCISPWNFPLAIFTGQIAAALAAGNSVLAKPAEQTPLIAAQGIAILLEAGVPPGVVQLLPGRGETVGAQLTGDDRVRGVMFTGSTEVATLLQRNIASRLDAQGRPIPLIAETGGMNAMIVDSSALTEQVVVDVLASAFDSAGQRCSALRVLCLQDEIADHTLKMLRGAMAECRMGNPGRLTTDIGPVIDSEAKANIERHIQTMRSKGRPVFQAVRENSEDAREWQSGTFVAPTLIELDDFAELQKEVFGPVLHVVRYNRNQLPELIEQINASGYGLTLGVHTRIDETIAQVTGSAHVGNLYVNRNMVGAVVGVQPFGGEGLSGTGPKAGGPLYLYRLLANRPESALAVTLARQDAKYPVDAQLKAALTQPLNALREWAANRPELQALCTQYGELAQAGTQRLLPGPTGERNTWTLLPRERVLCIADDEQDALTQLAAVLAVGSQVLWPDDALHRQLVKALPSAVSERIQLAKAENITAQPFDAVIFHGDSDQLRALCEAVAARDGTIVSVQGFARGESNILLERLYIERSLSVNTAAAGGNASLMTIG</sequence>
<feature type="chain" id="PRO_0000056524" description="Bifunctional protein PutA">
    <location>
        <begin position="1"/>
        <end position="1320"/>
    </location>
</feature>
<feature type="region of interest" description="Proline dehydrogenase">
    <location>
        <begin position="228"/>
        <end position="574"/>
    </location>
</feature>
<feature type="region of interest" description="Aldehyde dehydrogenase">
    <location>
        <begin position="653"/>
        <end position="1119"/>
    </location>
</feature>
<feature type="active site" evidence="1">
    <location>
        <position position="883"/>
    </location>
</feature>
<feature type="active site" evidence="1">
    <location>
        <position position="917"/>
    </location>
</feature>
<feature type="sequence conflict" description="In Ref. 1; AAB59985." evidence="3" ref="1">
    <original>G</original>
    <variation>A</variation>
    <location>
        <position position="531"/>
    </location>
</feature>
<feature type="strand" evidence="4">
    <location>
        <begin position="3"/>
        <end position="11"/>
    </location>
</feature>
<feature type="helix" evidence="4">
    <location>
        <begin position="12"/>
        <end position="24"/>
    </location>
</feature>
<feature type="helix" evidence="4">
    <location>
        <begin position="29"/>
        <end position="45"/>
    </location>
</feature>
<feature type="helix" evidence="6">
    <location>
        <begin position="90"/>
        <end position="98"/>
    </location>
</feature>
<feature type="helix" evidence="6">
    <location>
        <begin position="103"/>
        <end position="114"/>
    </location>
</feature>
<feature type="helix" evidence="6">
    <location>
        <begin position="118"/>
        <end position="136"/>
    </location>
</feature>
<feature type="turn" evidence="6">
    <location>
        <begin position="137"/>
        <end position="139"/>
    </location>
</feature>
<feature type="helix" evidence="6">
    <location>
        <begin position="141"/>
        <end position="154"/>
    </location>
</feature>
<feature type="helix" evidence="6">
    <location>
        <begin position="159"/>
        <end position="173"/>
    </location>
</feature>
<feature type="strand" evidence="7">
    <location>
        <begin position="175"/>
        <end position="177"/>
    </location>
</feature>
<feature type="helix" evidence="6">
    <location>
        <begin position="178"/>
        <end position="187"/>
    </location>
</feature>
<feature type="helix" evidence="6">
    <location>
        <begin position="208"/>
        <end position="214"/>
    </location>
</feature>
<feature type="helix" evidence="6">
    <location>
        <begin position="228"/>
        <end position="256"/>
    </location>
</feature>
<feature type="helix" evidence="6">
    <location>
        <begin position="257"/>
        <end position="259"/>
    </location>
</feature>
<feature type="strand" evidence="6">
    <location>
        <begin position="262"/>
        <end position="264"/>
    </location>
</feature>
<feature type="helix" evidence="6">
    <location>
        <begin position="265"/>
        <end position="270"/>
    </location>
</feature>
<feature type="helix" evidence="6">
    <location>
        <begin position="273"/>
        <end position="276"/>
    </location>
</feature>
<feature type="turn" evidence="6">
    <location>
        <begin position="277"/>
        <end position="279"/>
    </location>
</feature>
<feature type="strand" evidence="6">
    <location>
        <begin position="280"/>
        <end position="286"/>
    </location>
</feature>
<feature type="helix" evidence="6">
    <location>
        <begin position="294"/>
        <end position="315"/>
    </location>
</feature>
<feature type="helix" evidence="6">
    <location>
        <begin position="319"/>
        <end position="322"/>
    </location>
</feature>
<feature type="strand" evidence="6">
    <location>
        <begin position="325"/>
        <end position="328"/>
    </location>
</feature>
<feature type="helix" evidence="6">
    <location>
        <begin position="330"/>
        <end position="332"/>
    </location>
</feature>
<feature type="helix" evidence="6">
    <location>
        <begin position="337"/>
        <end position="339"/>
    </location>
</feature>
<feature type="helix" evidence="6">
    <location>
        <begin position="342"/>
        <end position="363"/>
    </location>
</feature>
<feature type="strand" evidence="6">
    <location>
        <begin position="367"/>
        <end position="369"/>
    </location>
</feature>
<feature type="helix" evidence="6">
    <location>
        <begin position="374"/>
        <end position="376"/>
    </location>
</feature>
<feature type="helix" evidence="6">
    <location>
        <begin position="377"/>
        <end position="388"/>
    </location>
</feature>
<feature type="helix" evidence="6">
    <location>
        <begin position="391"/>
        <end position="393"/>
    </location>
</feature>
<feature type="strand" evidence="6">
    <location>
        <begin position="399"/>
        <end position="404"/>
    </location>
</feature>
<feature type="helix" evidence="6">
    <location>
        <begin position="410"/>
        <end position="424"/>
    </location>
</feature>
<feature type="strand" evidence="6">
    <location>
        <begin position="428"/>
        <end position="433"/>
    </location>
</feature>
<feature type="helix" evidence="6">
    <location>
        <begin position="438"/>
        <end position="448"/>
    </location>
</feature>
<feature type="helix" evidence="6">
    <location>
        <begin position="459"/>
        <end position="474"/>
    </location>
</feature>
<feature type="turn" evidence="6">
    <location>
        <begin position="477"/>
        <end position="479"/>
    </location>
</feature>
<feature type="strand" evidence="6">
    <location>
        <begin position="480"/>
        <end position="485"/>
    </location>
</feature>
<feature type="helix" evidence="6">
    <location>
        <begin position="489"/>
        <end position="498"/>
    </location>
</feature>
<feature type="helix" evidence="6">
    <location>
        <begin position="505"/>
        <end position="507"/>
    </location>
</feature>
<feature type="strand" evidence="6">
    <location>
        <begin position="509"/>
        <end position="513"/>
    </location>
</feature>
<feature type="turn" evidence="6">
    <location>
        <begin position="514"/>
        <end position="516"/>
    </location>
</feature>
<feature type="helix" evidence="6">
    <location>
        <begin position="518"/>
        <end position="521"/>
    </location>
</feature>
<feature type="turn" evidence="6">
    <location>
        <begin position="522"/>
        <end position="524"/>
    </location>
</feature>
<feature type="helix" evidence="6">
    <location>
        <begin position="528"/>
        <end position="530"/>
    </location>
</feature>
<feature type="strand" evidence="6">
    <location>
        <begin position="537"/>
        <end position="543"/>
    </location>
</feature>
<feature type="helix" evidence="6">
    <location>
        <begin position="546"/>
        <end position="548"/>
    </location>
</feature>
<feature type="helix" evidence="6">
    <location>
        <begin position="550"/>
        <end position="561"/>
    </location>
</feature>
<feature type="helix" evidence="5">
    <location>
        <begin position="562"/>
        <end position="564"/>
    </location>
</feature>
<feature type="helix" evidence="6">
    <location>
        <begin position="566"/>
        <end position="570"/>
    </location>
</feature>
<feature type="helix" evidence="6">
    <location>
        <begin position="577"/>
        <end position="580"/>
    </location>
</feature>
<feature type="helix" evidence="6">
    <location>
        <begin position="584"/>
        <end position="595"/>
    </location>
</feature>
<keyword id="KW-0002">3D-structure</keyword>
<keyword id="KW-0238">DNA-binding</keyword>
<keyword id="KW-0274">FAD</keyword>
<keyword id="KW-0285">Flavoprotein</keyword>
<keyword id="KW-0511">Multifunctional enzyme</keyword>
<keyword id="KW-0520">NAD</keyword>
<keyword id="KW-0560">Oxidoreductase</keyword>
<keyword id="KW-0642">Proline metabolism</keyword>
<keyword id="KW-1185">Reference proteome</keyword>
<keyword id="KW-0678">Repressor</keyword>
<keyword id="KW-0804">Transcription</keyword>
<keyword id="KW-0805">Transcription regulation</keyword>